<protein>
    <recommendedName>
        <fullName>Cytochrome c oxidase subunit 2</fullName>
        <ecNumber>7.1.1.9</ecNumber>
    </recommendedName>
    <alternativeName>
        <fullName>Cytochrome c oxidase polypeptide II</fullName>
    </alternativeName>
</protein>
<reference key="1">
    <citation type="journal article" date="2005" name="Mol. Phylogenet. Evol.">
        <title>Multigene phylogeny of the Old World mice, Murinae, reveals distinct geographic lineages and the declining utility of mitochondrial genes compared to nuclear genes.</title>
        <authorList>
            <person name="Steppan S.J."/>
            <person name="Adkins R.M."/>
            <person name="Spinks P.Q."/>
            <person name="Hale C."/>
        </authorList>
    </citation>
    <scope>NUCLEOTIDE SEQUENCE [GENOMIC DNA]</scope>
</reference>
<evidence type="ECO:0000250" key="1">
    <source>
        <dbReference type="UniProtKB" id="P00403"/>
    </source>
</evidence>
<evidence type="ECO:0000250" key="2">
    <source>
        <dbReference type="UniProtKB" id="P00410"/>
    </source>
</evidence>
<evidence type="ECO:0000250" key="3">
    <source>
        <dbReference type="UniProtKB" id="P68530"/>
    </source>
</evidence>
<evidence type="ECO:0000305" key="4"/>
<comment type="function">
    <text evidence="2">Component of the cytochrome c oxidase, the last enzyme in the mitochondrial electron transport chain which drives oxidative phosphorylation. The respiratory chain contains 3 multisubunit complexes succinate dehydrogenase (complex II, CII), ubiquinol-cytochrome c oxidoreductase (cytochrome b-c1 complex, complex III, CIII) and cytochrome c oxidase (complex IV, CIV), that cooperate to transfer electrons derived from NADH and succinate to molecular oxygen, creating an electrochemical gradient over the inner membrane that drives transmembrane transport and the ATP synthase. Cytochrome c oxidase is the component of the respiratory chain that catalyzes the reduction of oxygen to water. Electrons originating from reduced cytochrome c in the intermembrane space (IMS) are transferred via the dinuclear copper A center (CU(A)) of subunit 2 and heme A of subunit 1 to the active site in subunit 1, a binuclear center (BNC) formed by heme A3 and copper B (CU(B)). The BNC reduces molecular oxygen to 2 water molecules using 4 electrons from cytochrome c in the IMS and 4 protons from the mitochondrial matrix.</text>
</comment>
<comment type="catalytic activity">
    <reaction evidence="2">
        <text>4 Fe(II)-[cytochrome c] + O2 + 8 H(+)(in) = 4 Fe(III)-[cytochrome c] + 2 H2O + 4 H(+)(out)</text>
        <dbReference type="Rhea" id="RHEA:11436"/>
        <dbReference type="Rhea" id="RHEA-COMP:10350"/>
        <dbReference type="Rhea" id="RHEA-COMP:14399"/>
        <dbReference type="ChEBI" id="CHEBI:15377"/>
        <dbReference type="ChEBI" id="CHEBI:15378"/>
        <dbReference type="ChEBI" id="CHEBI:15379"/>
        <dbReference type="ChEBI" id="CHEBI:29033"/>
        <dbReference type="ChEBI" id="CHEBI:29034"/>
        <dbReference type="EC" id="7.1.1.9"/>
    </reaction>
    <physiologicalReaction direction="left-to-right" evidence="2">
        <dbReference type="Rhea" id="RHEA:11437"/>
    </physiologicalReaction>
</comment>
<comment type="cofactor">
    <cofactor evidence="3">
        <name>Cu cation</name>
        <dbReference type="ChEBI" id="CHEBI:23378"/>
    </cofactor>
    <text evidence="3">Binds a dinuclear copper A center per subunit.</text>
</comment>
<comment type="subunit">
    <text evidence="1 3">Component of the cytochrome c oxidase (complex IV, CIV), a multisubunit enzyme composed of 14 subunits. The complex is composed of a catalytic core of 3 subunits MT-CO1, MT-CO2 and MT-CO3, encoded in the mitochondrial DNA, and 11 supernumerary subunits COX4I, COX5A, COX5B, COX6A, COX6B, COX6C, COX7A, COX7B, COX7C, COX8 and NDUFA4, which are encoded in the nuclear genome. The complex exists as a monomer or a dimer and forms supercomplexes (SCs) in the inner mitochondrial membrane with NADH-ubiquinone oxidoreductase (complex I, CI) and ubiquinol-cytochrome c oxidoreductase (cytochrome b-c1 complex, complex III, CIII), resulting in different assemblies (supercomplex SCI(1)III(2)IV(1) and megacomplex MCI(2)III(2)IV(2)) (By similarity). Found in a complex with TMEM177, COA6, COX18, COX20, SCO1 and SCO2. Interacts with TMEM177 in a COX20-dependent manner. Interacts with COX20. Interacts with COX16 (By similarity).</text>
</comment>
<comment type="subcellular location">
    <subcellularLocation>
        <location evidence="3">Mitochondrion inner membrane</location>
        <topology evidence="3">Multi-pass membrane protein</topology>
    </subcellularLocation>
</comment>
<comment type="similarity">
    <text evidence="4">Belongs to the cytochrome c oxidase subunit 2 family.</text>
</comment>
<accession>Q38RY6</accession>
<keyword id="KW-0186">Copper</keyword>
<keyword id="KW-0249">Electron transport</keyword>
<keyword id="KW-0460">Magnesium</keyword>
<keyword id="KW-0472">Membrane</keyword>
<keyword id="KW-0479">Metal-binding</keyword>
<keyword id="KW-0496">Mitochondrion</keyword>
<keyword id="KW-0999">Mitochondrion inner membrane</keyword>
<keyword id="KW-0679">Respiratory chain</keyword>
<keyword id="KW-1278">Translocase</keyword>
<keyword id="KW-0812">Transmembrane</keyword>
<keyword id="KW-1133">Transmembrane helix</keyword>
<keyword id="KW-0813">Transport</keyword>
<feature type="chain" id="PRO_0000254934" description="Cytochrome c oxidase subunit 2">
    <location>
        <begin position="1"/>
        <end position="227"/>
    </location>
</feature>
<feature type="topological domain" description="Mitochondrial intermembrane" evidence="3">
    <location>
        <begin position="1"/>
        <end position="14"/>
    </location>
</feature>
<feature type="transmembrane region" description="Helical; Name=I" evidence="3">
    <location>
        <begin position="15"/>
        <end position="45"/>
    </location>
</feature>
<feature type="topological domain" description="Mitochondrial matrix" evidence="3">
    <location>
        <begin position="46"/>
        <end position="59"/>
    </location>
</feature>
<feature type="transmembrane region" description="Helical; Name=II" evidence="3">
    <location>
        <begin position="60"/>
        <end position="87"/>
    </location>
</feature>
<feature type="topological domain" description="Mitochondrial intermembrane" evidence="3">
    <location>
        <begin position="88"/>
        <end position="227"/>
    </location>
</feature>
<feature type="binding site" evidence="3">
    <location>
        <position position="161"/>
    </location>
    <ligand>
        <name>Cu cation</name>
        <dbReference type="ChEBI" id="CHEBI:23378"/>
        <label>A1</label>
    </ligand>
</feature>
<feature type="binding site" evidence="3">
    <location>
        <position position="196"/>
    </location>
    <ligand>
        <name>Cu cation</name>
        <dbReference type="ChEBI" id="CHEBI:23378"/>
        <label>A1</label>
    </ligand>
</feature>
<feature type="binding site" evidence="3">
    <location>
        <position position="196"/>
    </location>
    <ligand>
        <name>Cu cation</name>
        <dbReference type="ChEBI" id="CHEBI:23378"/>
        <label>A2</label>
    </ligand>
</feature>
<feature type="binding site" evidence="3">
    <location>
        <position position="198"/>
    </location>
    <ligand>
        <name>Cu cation</name>
        <dbReference type="ChEBI" id="CHEBI:23378"/>
        <label>A2</label>
    </ligand>
</feature>
<feature type="binding site" evidence="3">
    <location>
        <position position="198"/>
    </location>
    <ligand>
        <name>Mg(2+)</name>
        <dbReference type="ChEBI" id="CHEBI:18420"/>
        <note>ligand shared with MT-CO1</note>
    </ligand>
</feature>
<feature type="binding site" evidence="3">
    <location>
        <position position="200"/>
    </location>
    <ligand>
        <name>Cu cation</name>
        <dbReference type="ChEBI" id="CHEBI:23378"/>
        <label>A1</label>
    </ligand>
</feature>
<feature type="binding site" evidence="3">
    <location>
        <position position="200"/>
    </location>
    <ligand>
        <name>Cu cation</name>
        <dbReference type="ChEBI" id="CHEBI:23378"/>
        <label>A2</label>
    </ligand>
</feature>
<feature type="binding site" evidence="3">
    <location>
        <position position="204"/>
    </location>
    <ligand>
        <name>Cu cation</name>
        <dbReference type="ChEBI" id="CHEBI:23378"/>
        <label>A2</label>
    </ligand>
</feature>
<feature type="binding site" evidence="3">
    <location>
        <position position="207"/>
    </location>
    <ligand>
        <name>Cu cation</name>
        <dbReference type="ChEBI" id="CHEBI:23378"/>
        <label>A1</label>
    </ligand>
</feature>
<gene>
    <name type="primary">MT-CO2</name>
    <name type="synonym">COII</name>
    <name type="synonym">COX2</name>
    <name type="synonym">COXII</name>
    <name type="synonym">MTCO2</name>
</gene>
<name>COX2_NIVCU</name>
<organism>
    <name type="scientific">Niviventer culturatus</name>
    <name type="common">Oldfield white-bellied rat</name>
    <dbReference type="NCBI Taxonomy" id="332666"/>
    <lineage>
        <taxon>Eukaryota</taxon>
        <taxon>Metazoa</taxon>
        <taxon>Chordata</taxon>
        <taxon>Craniata</taxon>
        <taxon>Vertebrata</taxon>
        <taxon>Euteleostomi</taxon>
        <taxon>Mammalia</taxon>
        <taxon>Eutheria</taxon>
        <taxon>Euarchontoglires</taxon>
        <taxon>Glires</taxon>
        <taxon>Rodentia</taxon>
        <taxon>Myomorpha</taxon>
        <taxon>Muroidea</taxon>
        <taxon>Muridae</taxon>
        <taxon>Murinae</taxon>
        <taxon>Niviventer</taxon>
    </lineage>
</organism>
<sequence>MAYTFQLGLQDATSPIMEELTNFHDHTLMIVFLISSLVLYVISLMLTTKLTHTNTMDAQEVETIWTILPAVILILIALPSLRILYMMDEINNPVLTVKTMGHQWYWSYEYTDYEDLCFDSYMIPTNDLKPGELRLLEVDNRVVLPMELPIRMLISSEDVLHSWAVPSLGLKTDAIPGRLNQATVTSNRPGLFYGQCSEICGSNHSFMPIVLEMVPLKHFENWSASMI</sequence>
<proteinExistence type="inferred from homology"/>
<dbReference type="EC" id="7.1.1.9"/>
<dbReference type="EMBL" id="DQ019108">
    <property type="protein sequence ID" value="ABA28414.1"/>
    <property type="molecule type" value="Genomic_DNA"/>
</dbReference>
<dbReference type="SMR" id="Q38RY6"/>
<dbReference type="GO" id="GO:0005743">
    <property type="term" value="C:mitochondrial inner membrane"/>
    <property type="evidence" value="ECO:0007669"/>
    <property type="project" value="UniProtKB-SubCell"/>
</dbReference>
<dbReference type="GO" id="GO:0045277">
    <property type="term" value="C:respiratory chain complex IV"/>
    <property type="evidence" value="ECO:0000250"/>
    <property type="project" value="UniProtKB"/>
</dbReference>
<dbReference type="GO" id="GO:0005507">
    <property type="term" value="F:copper ion binding"/>
    <property type="evidence" value="ECO:0007669"/>
    <property type="project" value="InterPro"/>
</dbReference>
<dbReference type="GO" id="GO:0004129">
    <property type="term" value="F:cytochrome-c oxidase activity"/>
    <property type="evidence" value="ECO:0007669"/>
    <property type="project" value="UniProtKB-EC"/>
</dbReference>
<dbReference type="GO" id="GO:0042773">
    <property type="term" value="P:ATP synthesis coupled electron transport"/>
    <property type="evidence" value="ECO:0007669"/>
    <property type="project" value="TreeGrafter"/>
</dbReference>
<dbReference type="CDD" id="cd13912">
    <property type="entry name" value="CcO_II_C"/>
    <property type="match status" value="1"/>
</dbReference>
<dbReference type="FunFam" id="1.10.287.90:FF:000001">
    <property type="entry name" value="Cytochrome c oxidase subunit 2"/>
    <property type="match status" value="1"/>
</dbReference>
<dbReference type="FunFam" id="2.60.40.420:FF:000001">
    <property type="entry name" value="Cytochrome c oxidase subunit 2"/>
    <property type="match status" value="1"/>
</dbReference>
<dbReference type="Gene3D" id="1.10.287.90">
    <property type="match status" value="1"/>
</dbReference>
<dbReference type="Gene3D" id="2.60.40.420">
    <property type="entry name" value="Cupredoxins - blue copper proteins"/>
    <property type="match status" value="1"/>
</dbReference>
<dbReference type="InterPro" id="IPR045187">
    <property type="entry name" value="CcO_II"/>
</dbReference>
<dbReference type="InterPro" id="IPR002429">
    <property type="entry name" value="CcO_II-like_C"/>
</dbReference>
<dbReference type="InterPro" id="IPR034210">
    <property type="entry name" value="CcO_II_C"/>
</dbReference>
<dbReference type="InterPro" id="IPR001505">
    <property type="entry name" value="Copper_CuA"/>
</dbReference>
<dbReference type="InterPro" id="IPR008972">
    <property type="entry name" value="Cupredoxin"/>
</dbReference>
<dbReference type="InterPro" id="IPR014222">
    <property type="entry name" value="Cyt_c_oxidase_su2"/>
</dbReference>
<dbReference type="InterPro" id="IPR011759">
    <property type="entry name" value="Cyt_c_oxidase_su2_TM_dom"/>
</dbReference>
<dbReference type="InterPro" id="IPR036257">
    <property type="entry name" value="Cyt_c_oxidase_su2_TM_sf"/>
</dbReference>
<dbReference type="NCBIfam" id="TIGR02866">
    <property type="entry name" value="CoxB"/>
    <property type="match status" value="1"/>
</dbReference>
<dbReference type="PANTHER" id="PTHR22888:SF9">
    <property type="entry name" value="CYTOCHROME C OXIDASE SUBUNIT 2"/>
    <property type="match status" value="1"/>
</dbReference>
<dbReference type="PANTHER" id="PTHR22888">
    <property type="entry name" value="CYTOCHROME C OXIDASE, SUBUNIT II"/>
    <property type="match status" value="1"/>
</dbReference>
<dbReference type="Pfam" id="PF00116">
    <property type="entry name" value="COX2"/>
    <property type="match status" value="1"/>
</dbReference>
<dbReference type="Pfam" id="PF02790">
    <property type="entry name" value="COX2_TM"/>
    <property type="match status" value="1"/>
</dbReference>
<dbReference type="PRINTS" id="PR01166">
    <property type="entry name" value="CYCOXIDASEII"/>
</dbReference>
<dbReference type="SUPFAM" id="SSF49503">
    <property type="entry name" value="Cupredoxins"/>
    <property type="match status" value="1"/>
</dbReference>
<dbReference type="SUPFAM" id="SSF81464">
    <property type="entry name" value="Cytochrome c oxidase subunit II-like, transmembrane region"/>
    <property type="match status" value="1"/>
</dbReference>
<dbReference type="PROSITE" id="PS00078">
    <property type="entry name" value="COX2"/>
    <property type="match status" value="1"/>
</dbReference>
<dbReference type="PROSITE" id="PS50857">
    <property type="entry name" value="COX2_CUA"/>
    <property type="match status" value="1"/>
</dbReference>
<dbReference type="PROSITE" id="PS50999">
    <property type="entry name" value="COX2_TM"/>
    <property type="match status" value="1"/>
</dbReference>
<geneLocation type="mitochondrion"/>